<feature type="chain" id="PRO_0000365882" description="ATP synthase subunit c">
    <location>
        <begin position="1"/>
        <end position="82"/>
    </location>
</feature>
<feature type="transmembrane region" description="Helical" evidence="1">
    <location>
        <begin position="6"/>
        <end position="26"/>
    </location>
</feature>
<feature type="transmembrane region" description="Helical" evidence="1">
    <location>
        <begin position="49"/>
        <end position="69"/>
    </location>
</feature>
<feature type="site" description="Reversibly protonated during proton transport" evidence="1">
    <location>
        <position position="61"/>
    </location>
</feature>
<reference key="1">
    <citation type="journal article" date="2004" name="Nat. Biotechnol.">
        <title>The genome sequence of the anaerobic, sulfate-reducing bacterium Desulfovibrio vulgaris Hildenborough.</title>
        <authorList>
            <person name="Heidelberg J.F."/>
            <person name="Seshadri R."/>
            <person name="Haveman S.A."/>
            <person name="Hemme C.L."/>
            <person name="Paulsen I.T."/>
            <person name="Kolonay J.F."/>
            <person name="Eisen J.A."/>
            <person name="Ward N.L."/>
            <person name="Methe B.A."/>
            <person name="Brinkac L.M."/>
            <person name="Daugherty S.C."/>
            <person name="DeBoy R.T."/>
            <person name="Dodson R.J."/>
            <person name="Durkin A.S."/>
            <person name="Madupu R."/>
            <person name="Nelson W.C."/>
            <person name="Sullivan S.A."/>
            <person name="Fouts D.E."/>
            <person name="Haft D.H."/>
            <person name="Selengut J."/>
            <person name="Peterson J.D."/>
            <person name="Davidsen T.M."/>
            <person name="Zafar N."/>
            <person name="Zhou L."/>
            <person name="Radune D."/>
            <person name="Dimitrov G."/>
            <person name="Hance M."/>
            <person name="Tran K."/>
            <person name="Khouri H.M."/>
            <person name="Gill J."/>
            <person name="Utterback T.R."/>
            <person name="Feldblyum T.V."/>
            <person name="Wall J.D."/>
            <person name="Voordouw G."/>
            <person name="Fraser C.M."/>
        </authorList>
    </citation>
    <scope>NUCLEOTIDE SEQUENCE [LARGE SCALE GENOMIC DNA]</scope>
    <source>
        <strain>ATCC 29579 / DSM 644 / CCUG 34227 / NCIMB 8303 / VKM B-1760 / Hildenborough</strain>
    </source>
</reference>
<accession>Q72DL2</accession>
<organism>
    <name type="scientific">Nitratidesulfovibrio vulgaris (strain ATCC 29579 / DSM 644 / CCUG 34227 / NCIMB 8303 / VKM B-1760 / Hildenborough)</name>
    <name type="common">Desulfovibrio vulgaris</name>
    <dbReference type="NCBI Taxonomy" id="882"/>
    <lineage>
        <taxon>Bacteria</taxon>
        <taxon>Pseudomonadati</taxon>
        <taxon>Thermodesulfobacteriota</taxon>
        <taxon>Desulfovibrionia</taxon>
        <taxon>Desulfovibrionales</taxon>
        <taxon>Desulfovibrionaceae</taxon>
        <taxon>Nitratidesulfovibrio</taxon>
    </lineage>
</organism>
<proteinExistence type="inferred from homology"/>
<protein>
    <recommendedName>
        <fullName evidence="1">ATP synthase subunit c</fullName>
    </recommendedName>
    <alternativeName>
        <fullName evidence="1">ATP synthase F(0) sector subunit c</fullName>
    </alternativeName>
    <alternativeName>
        <fullName evidence="1">F-type ATPase subunit c</fullName>
        <shortName evidence="1">F-ATPase subunit c</shortName>
    </alternativeName>
    <alternativeName>
        <fullName evidence="1">Lipid-binding protein</fullName>
    </alternativeName>
</protein>
<keyword id="KW-0066">ATP synthesis</keyword>
<keyword id="KW-0997">Cell inner membrane</keyword>
<keyword id="KW-1003">Cell membrane</keyword>
<keyword id="KW-0138">CF(0)</keyword>
<keyword id="KW-0375">Hydrogen ion transport</keyword>
<keyword id="KW-0406">Ion transport</keyword>
<keyword id="KW-0446">Lipid-binding</keyword>
<keyword id="KW-0472">Membrane</keyword>
<keyword id="KW-1185">Reference proteome</keyword>
<keyword id="KW-0812">Transmembrane</keyword>
<keyword id="KW-1133">Transmembrane helix</keyword>
<keyword id="KW-0813">Transport</keyword>
<sequence length="82" mass="8101">MDSSALGLTCLAAAIGMAIAAAGCGIGQGMGLKAACEGTARNPEAGGKIMVTLILGLAFVESLAIYALVVNLILLFANPFMG</sequence>
<name>ATPL_NITV2</name>
<evidence type="ECO:0000255" key="1">
    <source>
        <dbReference type="HAMAP-Rule" id="MF_01396"/>
    </source>
</evidence>
<comment type="function">
    <text evidence="1">F(1)F(0) ATP synthase produces ATP from ADP in the presence of a proton or sodium gradient. F-type ATPases consist of two structural domains, F(1) containing the extramembraneous catalytic core and F(0) containing the membrane proton channel, linked together by a central stalk and a peripheral stalk. During catalysis, ATP synthesis in the catalytic domain of F(1) is coupled via a rotary mechanism of the central stalk subunits to proton translocation.</text>
</comment>
<comment type="function">
    <text evidence="1">Key component of the F(0) channel; it plays a direct role in translocation across the membrane. A homomeric c-ring of between 10-14 subunits forms the central stalk rotor element with the F(1) delta and epsilon subunits.</text>
</comment>
<comment type="subunit">
    <text evidence="1">F-type ATPases have 2 components, F(1) - the catalytic core - and F(0) - the membrane proton channel. F(1) has five subunits: alpha(3), beta(3), gamma(1), delta(1), epsilon(1). F(0) has three main subunits: a(1), b(2) and c(10-14). The alpha and beta chains form an alternating ring which encloses part of the gamma chain. F(1) is attached to F(0) by a central stalk formed by the gamma and epsilon chains, while a peripheral stalk is formed by the delta and b chains.</text>
</comment>
<comment type="subcellular location">
    <subcellularLocation>
        <location evidence="1">Cell inner membrane</location>
        <topology evidence="1">Multi-pass membrane protein</topology>
    </subcellularLocation>
</comment>
<comment type="similarity">
    <text evidence="1">Belongs to the ATPase C chain family.</text>
</comment>
<dbReference type="EMBL" id="AE017285">
    <property type="protein sequence ID" value="AAS95397.1"/>
    <property type="molecule type" value="Genomic_DNA"/>
</dbReference>
<dbReference type="RefSeq" id="YP_010138.1">
    <property type="nucleotide sequence ID" value="NC_002937.3"/>
</dbReference>
<dbReference type="SMR" id="Q72DL2"/>
<dbReference type="STRING" id="882.DVU_0917"/>
<dbReference type="PaxDb" id="882-DVU_0917"/>
<dbReference type="EnsemblBacteria" id="AAS95397">
    <property type="protein sequence ID" value="AAS95397"/>
    <property type="gene ID" value="DVU_0917"/>
</dbReference>
<dbReference type="KEGG" id="dvu:DVU_0917"/>
<dbReference type="PATRIC" id="fig|882.5.peg.860"/>
<dbReference type="eggNOG" id="COG0636">
    <property type="taxonomic scope" value="Bacteria"/>
</dbReference>
<dbReference type="HOGENOM" id="CLU_148047_2_0_7"/>
<dbReference type="OrthoDB" id="5296711at2"/>
<dbReference type="Proteomes" id="UP000002194">
    <property type="component" value="Chromosome"/>
</dbReference>
<dbReference type="GO" id="GO:0005886">
    <property type="term" value="C:plasma membrane"/>
    <property type="evidence" value="ECO:0007669"/>
    <property type="project" value="UniProtKB-SubCell"/>
</dbReference>
<dbReference type="GO" id="GO:0045259">
    <property type="term" value="C:proton-transporting ATP synthase complex"/>
    <property type="evidence" value="ECO:0007669"/>
    <property type="project" value="UniProtKB-KW"/>
</dbReference>
<dbReference type="GO" id="GO:0033177">
    <property type="term" value="C:proton-transporting two-sector ATPase complex, proton-transporting domain"/>
    <property type="evidence" value="ECO:0007669"/>
    <property type="project" value="InterPro"/>
</dbReference>
<dbReference type="GO" id="GO:0008289">
    <property type="term" value="F:lipid binding"/>
    <property type="evidence" value="ECO:0007669"/>
    <property type="project" value="UniProtKB-KW"/>
</dbReference>
<dbReference type="GO" id="GO:0046933">
    <property type="term" value="F:proton-transporting ATP synthase activity, rotational mechanism"/>
    <property type="evidence" value="ECO:0007669"/>
    <property type="project" value="UniProtKB-UniRule"/>
</dbReference>
<dbReference type="CDD" id="cd18121">
    <property type="entry name" value="ATP-synt_Fo_c"/>
    <property type="match status" value="1"/>
</dbReference>
<dbReference type="Gene3D" id="1.20.120.610">
    <property type="entry name" value="lithium bound rotor ring of v- atpase"/>
    <property type="match status" value="1"/>
</dbReference>
<dbReference type="HAMAP" id="MF_01396">
    <property type="entry name" value="ATP_synth_c_bact"/>
    <property type="match status" value="1"/>
</dbReference>
<dbReference type="InterPro" id="IPR005953">
    <property type="entry name" value="ATP_synth_csu_bac/chlpt"/>
</dbReference>
<dbReference type="InterPro" id="IPR000454">
    <property type="entry name" value="ATP_synth_F0_csu"/>
</dbReference>
<dbReference type="InterPro" id="IPR020537">
    <property type="entry name" value="ATP_synth_F0_csu_DDCD_BS"/>
</dbReference>
<dbReference type="InterPro" id="IPR002379">
    <property type="entry name" value="ATPase_proteolipid_c-like_dom"/>
</dbReference>
<dbReference type="InterPro" id="IPR035921">
    <property type="entry name" value="F/V-ATP_Csub_sf"/>
</dbReference>
<dbReference type="NCBIfam" id="TIGR01260">
    <property type="entry name" value="ATP_synt_c"/>
    <property type="match status" value="1"/>
</dbReference>
<dbReference type="PANTHER" id="PTHR10031">
    <property type="entry name" value="ATP SYNTHASE LIPID-BINDING PROTEIN, MITOCHONDRIAL"/>
    <property type="match status" value="1"/>
</dbReference>
<dbReference type="PANTHER" id="PTHR10031:SF0">
    <property type="entry name" value="ATPASE PROTEIN 9"/>
    <property type="match status" value="1"/>
</dbReference>
<dbReference type="Pfam" id="PF00137">
    <property type="entry name" value="ATP-synt_C"/>
    <property type="match status" value="1"/>
</dbReference>
<dbReference type="PRINTS" id="PR00124">
    <property type="entry name" value="ATPASEC"/>
</dbReference>
<dbReference type="SUPFAM" id="SSF81333">
    <property type="entry name" value="F1F0 ATP synthase subunit C"/>
    <property type="match status" value="1"/>
</dbReference>
<dbReference type="PROSITE" id="PS00605">
    <property type="entry name" value="ATPASE_C"/>
    <property type="match status" value="1"/>
</dbReference>
<gene>
    <name evidence="1" type="primary">atpE</name>
    <name type="ordered locus">DVU_0917</name>
</gene>